<evidence type="ECO:0000255" key="1">
    <source>
        <dbReference type="HAMAP-Rule" id="MF_00503"/>
    </source>
</evidence>
<evidence type="ECO:0000305" key="2"/>
<proteinExistence type="inferred from homology"/>
<sequence length="148" mass="15602">MEVILLEKITNLGNLGDKVNVKSGYARNFLLPQGKATAATAENVAAFEARRVELERLAAEKRSSAESRAAQLNELEITITATAGDEGKLFGSIGTADIADALTAAGLDVAKSEVRLPNGTIRQTGEYDVALHLHTDVEASIRLVVVGG</sequence>
<name>RL9_AZOVD</name>
<keyword id="KW-0687">Ribonucleoprotein</keyword>
<keyword id="KW-0689">Ribosomal protein</keyword>
<keyword id="KW-0694">RNA-binding</keyword>
<keyword id="KW-0699">rRNA-binding</keyword>
<accession>C1DLR5</accession>
<feature type="chain" id="PRO_1000206538" description="Large ribosomal subunit protein bL9">
    <location>
        <begin position="1"/>
        <end position="148"/>
    </location>
</feature>
<gene>
    <name evidence="1" type="primary">rplI</name>
    <name type="ordered locus">Avin_07670</name>
</gene>
<comment type="function">
    <text evidence="1">Binds to the 23S rRNA.</text>
</comment>
<comment type="similarity">
    <text evidence="1">Belongs to the bacterial ribosomal protein bL9 family.</text>
</comment>
<protein>
    <recommendedName>
        <fullName evidence="1">Large ribosomal subunit protein bL9</fullName>
    </recommendedName>
    <alternativeName>
        <fullName evidence="2">50S ribosomal protein L9</fullName>
    </alternativeName>
</protein>
<dbReference type="EMBL" id="CP001157">
    <property type="protein sequence ID" value="ACO77013.1"/>
    <property type="molecule type" value="Genomic_DNA"/>
</dbReference>
<dbReference type="RefSeq" id="WP_012699438.1">
    <property type="nucleotide sequence ID" value="NC_012560.1"/>
</dbReference>
<dbReference type="SMR" id="C1DLR5"/>
<dbReference type="STRING" id="322710.Avin_07670"/>
<dbReference type="EnsemblBacteria" id="ACO77013">
    <property type="protein sequence ID" value="ACO77013"/>
    <property type="gene ID" value="Avin_07670"/>
</dbReference>
<dbReference type="GeneID" id="88184164"/>
<dbReference type="KEGG" id="avn:Avin_07670"/>
<dbReference type="eggNOG" id="COG0359">
    <property type="taxonomic scope" value="Bacteria"/>
</dbReference>
<dbReference type="HOGENOM" id="CLU_078938_4_1_6"/>
<dbReference type="OrthoDB" id="9788336at2"/>
<dbReference type="Proteomes" id="UP000002424">
    <property type="component" value="Chromosome"/>
</dbReference>
<dbReference type="GO" id="GO:1990904">
    <property type="term" value="C:ribonucleoprotein complex"/>
    <property type="evidence" value="ECO:0007669"/>
    <property type="project" value="UniProtKB-KW"/>
</dbReference>
<dbReference type="GO" id="GO:0005840">
    <property type="term" value="C:ribosome"/>
    <property type="evidence" value="ECO:0007669"/>
    <property type="project" value="UniProtKB-KW"/>
</dbReference>
<dbReference type="GO" id="GO:0019843">
    <property type="term" value="F:rRNA binding"/>
    <property type="evidence" value="ECO:0007669"/>
    <property type="project" value="UniProtKB-UniRule"/>
</dbReference>
<dbReference type="GO" id="GO:0003735">
    <property type="term" value="F:structural constituent of ribosome"/>
    <property type="evidence" value="ECO:0007669"/>
    <property type="project" value="InterPro"/>
</dbReference>
<dbReference type="GO" id="GO:0006412">
    <property type="term" value="P:translation"/>
    <property type="evidence" value="ECO:0007669"/>
    <property type="project" value="UniProtKB-UniRule"/>
</dbReference>
<dbReference type="FunFam" id="3.40.5.10:FF:000001">
    <property type="entry name" value="50S ribosomal protein L9"/>
    <property type="match status" value="1"/>
</dbReference>
<dbReference type="Gene3D" id="3.10.430.100">
    <property type="entry name" value="Ribosomal protein L9, C-terminal domain"/>
    <property type="match status" value="1"/>
</dbReference>
<dbReference type="Gene3D" id="3.40.5.10">
    <property type="entry name" value="Ribosomal protein L9, N-terminal domain"/>
    <property type="match status" value="1"/>
</dbReference>
<dbReference type="HAMAP" id="MF_00503">
    <property type="entry name" value="Ribosomal_bL9"/>
    <property type="match status" value="1"/>
</dbReference>
<dbReference type="InterPro" id="IPR000244">
    <property type="entry name" value="Ribosomal_bL9"/>
</dbReference>
<dbReference type="InterPro" id="IPR009027">
    <property type="entry name" value="Ribosomal_bL9/RNase_H1_N"/>
</dbReference>
<dbReference type="InterPro" id="IPR020594">
    <property type="entry name" value="Ribosomal_bL9_bac/chp"/>
</dbReference>
<dbReference type="InterPro" id="IPR020069">
    <property type="entry name" value="Ribosomal_bL9_C"/>
</dbReference>
<dbReference type="InterPro" id="IPR036791">
    <property type="entry name" value="Ribosomal_bL9_C_sf"/>
</dbReference>
<dbReference type="InterPro" id="IPR020070">
    <property type="entry name" value="Ribosomal_bL9_N"/>
</dbReference>
<dbReference type="InterPro" id="IPR036935">
    <property type="entry name" value="Ribosomal_bL9_N_sf"/>
</dbReference>
<dbReference type="NCBIfam" id="TIGR00158">
    <property type="entry name" value="L9"/>
    <property type="match status" value="1"/>
</dbReference>
<dbReference type="PANTHER" id="PTHR21368">
    <property type="entry name" value="50S RIBOSOMAL PROTEIN L9"/>
    <property type="match status" value="1"/>
</dbReference>
<dbReference type="Pfam" id="PF03948">
    <property type="entry name" value="Ribosomal_L9_C"/>
    <property type="match status" value="1"/>
</dbReference>
<dbReference type="Pfam" id="PF01281">
    <property type="entry name" value="Ribosomal_L9_N"/>
    <property type="match status" value="1"/>
</dbReference>
<dbReference type="SUPFAM" id="SSF55658">
    <property type="entry name" value="L9 N-domain-like"/>
    <property type="match status" value="1"/>
</dbReference>
<dbReference type="SUPFAM" id="SSF55653">
    <property type="entry name" value="Ribosomal protein L9 C-domain"/>
    <property type="match status" value="1"/>
</dbReference>
<dbReference type="PROSITE" id="PS00651">
    <property type="entry name" value="RIBOSOMAL_L9"/>
    <property type="match status" value="1"/>
</dbReference>
<reference key="1">
    <citation type="journal article" date="2009" name="J. Bacteriol.">
        <title>Genome sequence of Azotobacter vinelandii, an obligate aerobe specialized to support diverse anaerobic metabolic processes.</title>
        <authorList>
            <person name="Setubal J.C."/>
            <person name="Dos Santos P."/>
            <person name="Goldman B.S."/>
            <person name="Ertesvaag H."/>
            <person name="Espin G."/>
            <person name="Rubio L.M."/>
            <person name="Valla S."/>
            <person name="Almeida N.F."/>
            <person name="Balasubramanian D."/>
            <person name="Cromes L."/>
            <person name="Curatti L."/>
            <person name="Du Z."/>
            <person name="Godsy E."/>
            <person name="Goodner B."/>
            <person name="Hellner-Burris K."/>
            <person name="Hernandez J.A."/>
            <person name="Houmiel K."/>
            <person name="Imperial J."/>
            <person name="Kennedy C."/>
            <person name="Larson T.J."/>
            <person name="Latreille P."/>
            <person name="Ligon L.S."/>
            <person name="Lu J."/>
            <person name="Maerk M."/>
            <person name="Miller N.M."/>
            <person name="Norton S."/>
            <person name="O'Carroll I.P."/>
            <person name="Paulsen I."/>
            <person name="Raulfs E.C."/>
            <person name="Roemer R."/>
            <person name="Rosser J."/>
            <person name="Segura D."/>
            <person name="Slater S."/>
            <person name="Stricklin S.L."/>
            <person name="Studholme D.J."/>
            <person name="Sun J."/>
            <person name="Viana C.J."/>
            <person name="Wallin E."/>
            <person name="Wang B."/>
            <person name="Wheeler C."/>
            <person name="Zhu H."/>
            <person name="Dean D.R."/>
            <person name="Dixon R."/>
            <person name="Wood D."/>
        </authorList>
    </citation>
    <scope>NUCLEOTIDE SEQUENCE [LARGE SCALE GENOMIC DNA]</scope>
    <source>
        <strain>DJ / ATCC BAA-1303</strain>
    </source>
</reference>
<organism>
    <name type="scientific">Azotobacter vinelandii (strain DJ / ATCC BAA-1303)</name>
    <dbReference type="NCBI Taxonomy" id="322710"/>
    <lineage>
        <taxon>Bacteria</taxon>
        <taxon>Pseudomonadati</taxon>
        <taxon>Pseudomonadota</taxon>
        <taxon>Gammaproteobacteria</taxon>
        <taxon>Pseudomonadales</taxon>
        <taxon>Pseudomonadaceae</taxon>
        <taxon>Azotobacter</taxon>
    </lineage>
</organism>